<dbReference type="EC" id="5.1.3.-" evidence="1"/>
<dbReference type="EMBL" id="AE014613">
    <property type="protein sequence ID" value="AAO71045.1"/>
    <property type="molecule type" value="Genomic_DNA"/>
</dbReference>
<dbReference type="EMBL" id="AL513382">
    <property type="protein sequence ID" value="CAD09543.1"/>
    <property type="molecule type" value="Genomic_DNA"/>
</dbReference>
<dbReference type="RefSeq" id="NP_457972.1">
    <property type="nucleotide sequence ID" value="NC_003198.1"/>
</dbReference>
<dbReference type="RefSeq" id="WP_001088043.1">
    <property type="nucleotide sequence ID" value="NZ_WSUR01000010.1"/>
</dbReference>
<dbReference type="SMR" id="Q8Z2Y1"/>
<dbReference type="STRING" id="220341.gene:17587654"/>
<dbReference type="KEGG" id="stt:t3538"/>
<dbReference type="KEGG" id="sty:STY3790"/>
<dbReference type="PATRIC" id="fig|220341.7.peg.3868"/>
<dbReference type="eggNOG" id="COG0036">
    <property type="taxonomic scope" value="Bacteria"/>
</dbReference>
<dbReference type="HOGENOM" id="CLU_054856_3_0_6"/>
<dbReference type="OMA" id="FALTIEW"/>
<dbReference type="OrthoDB" id="5676666at2"/>
<dbReference type="Proteomes" id="UP000000541">
    <property type="component" value="Chromosome"/>
</dbReference>
<dbReference type="Proteomes" id="UP000002670">
    <property type="component" value="Chromosome"/>
</dbReference>
<dbReference type="GO" id="GO:0005886">
    <property type="term" value="C:plasma membrane"/>
    <property type="evidence" value="ECO:0007669"/>
    <property type="project" value="UniProtKB-SubCell"/>
</dbReference>
<dbReference type="GO" id="GO:0046872">
    <property type="term" value="F:metal ion binding"/>
    <property type="evidence" value="ECO:0007669"/>
    <property type="project" value="UniProtKB-KW"/>
</dbReference>
<dbReference type="GO" id="GO:0016857">
    <property type="term" value="F:racemase and epimerase activity, acting on carbohydrates and derivatives"/>
    <property type="evidence" value="ECO:0007669"/>
    <property type="project" value="InterPro"/>
</dbReference>
<dbReference type="GO" id="GO:0005975">
    <property type="term" value="P:carbohydrate metabolic process"/>
    <property type="evidence" value="ECO:0007669"/>
    <property type="project" value="InterPro"/>
</dbReference>
<dbReference type="CDD" id="cd00429">
    <property type="entry name" value="RPE"/>
    <property type="match status" value="1"/>
</dbReference>
<dbReference type="Gene3D" id="3.20.20.70">
    <property type="entry name" value="Aldolase class I"/>
    <property type="match status" value="1"/>
</dbReference>
<dbReference type="InterPro" id="IPR013785">
    <property type="entry name" value="Aldolase_TIM"/>
</dbReference>
<dbReference type="InterPro" id="IPR000056">
    <property type="entry name" value="Ribul_P_3_epim-like"/>
</dbReference>
<dbReference type="InterPro" id="IPR011060">
    <property type="entry name" value="RibuloseP-bd_barrel"/>
</dbReference>
<dbReference type="NCBIfam" id="NF010658">
    <property type="entry name" value="PRK14057.1"/>
    <property type="match status" value="1"/>
</dbReference>
<dbReference type="PANTHER" id="PTHR11749">
    <property type="entry name" value="RIBULOSE-5-PHOSPHATE-3-EPIMERASE"/>
    <property type="match status" value="1"/>
</dbReference>
<dbReference type="Pfam" id="PF00834">
    <property type="entry name" value="Ribul_P_3_epim"/>
    <property type="match status" value="1"/>
</dbReference>
<dbReference type="SUPFAM" id="SSF51366">
    <property type="entry name" value="Ribulose-phoshate binding barrel"/>
    <property type="match status" value="1"/>
</dbReference>
<organism>
    <name type="scientific">Salmonella typhi</name>
    <dbReference type="NCBI Taxonomy" id="90370"/>
    <lineage>
        <taxon>Bacteria</taxon>
        <taxon>Pseudomonadati</taxon>
        <taxon>Pseudomonadota</taxon>
        <taxon>Gammaproteobacteria</taxon>
        <taxon>Enterobacterales</taxon>
        <taxon>Enterobacteriaceae</taxon>
        <taxon>Salmonella</taxon>
    </lineage>
</organism>
<sequence length="254" mass="27689">MNSQFAGLTREACVALLASYPLSVGILAGQWIALHRYLQQLEALNQPLLHLDLMDGQFCPQFTVGPWAVGQLPQTFIKDVHLMVADQWAAAQACVKAGAHCITLQAEGDIHLHHTLSWLGQQTVPVIDGEMPVIRGISLCPATPLDVIIPILSDVEVIQLLAVNPGYGSKMRSSDLYERVAQLLCLLGDKREGKIIVIDGSLTQDQLPSLIAQGIDRVVSGSALFRDDRLVENTRSWRAMFKVAGDTTFLPSTA</sequence>
<proteinExistence type="inferred from homology"/>
<name>LSRE_SALTI</name>
<protein>
    <recommendedName>
        <fullName>Putative epimerase LsrE</fullName>
        <ecNumber evidence="1">5.1.3.-</ecNumber>
    </recommendedName>
</protein>
<comment type="cofactor">
    <cofactor evidence="1">
        <name>a divalent metal cation</name>
        <dbReference type="ChEBI" id="CHEBI:60240"/>
    </cofactor>
    <text evidence="1">Binds 1 divalent metal cation per subunit.</text>
</comment>
<comment type="subcellular location">
    <subcellularLocation>
        <location evidence="3">Cell membrane</location>
        <topology evidence="3">Single-pass membrane protein</topology>
    </subcellularLocation>
</comment>
<comment type="similarity">
    <text evidence="3">Belongs to the ribulose-phosphate 3-epimerase family.</text>
</comment>
<accession>Q8Z2Y1</accession>
<accession>Q7C6A4</accession>
<gene>
    <name type="primary">lsrE</name>
    <name type="ordered locus">STY3790</name>
    <name type="ordered locus">t3538</name>
</gene>
<feature type="chain" id="PRO_0000351560" description="Putative epimerase LsrE">
    <location>
        <begin position="1"/>
        <end position="254"/>
    </location>
</feature>
<feature type="transmembrane region" description="Helical" evidence="2">
    <location>
        <begin position="14"/>
        <end position="34"/>
    </location>
</feature>
<feature type="active site" description="Proton acceptor" evidence="1">
    <location>
        <position position="52"/>
    </location>
</feature>
<feature type="active site" description="Proton donor" evidence="1">
    <location>
        <position position="199"/>
    </location>
</feature>
<feature type="binding site" evidence="1">
    <location>
        <position position="50"/>
    </location>
    <ligand>
        <name>a divalent metal cation</name>
        <dbReference type="ChEBI" id="CHEBI:60240"/>
    </ligand>
</feature>
<feature type="binding site" evidence="1">
    <location>
        <position position="52"/>
    </location>
    <ligand>
        <name>a divalent metal cation</name>
        <dbReference type="ChEBI" id="CHEBI:60240"/>
    </ligand>
</feature>
<feature type="binding site" evidence="1">
    <location>
        <position position="81"/>
    </location>
    <ligand>
        <name>a divalent metal cation</name>
        <dbReference type="ChEBI" id="CHEBI:60240"/>
    </ligand>
</feature>
<feature type="binding site" evidence="1">
    <location>
        <position position="81"/>
    </location>
    <ligand>
        <name>substrate</name>
    </ligand>
</feature>
<feature type="binding site" evidence="1">
    <location>
        <begin position="166"/>
        <end position="169"/>
    </location>
    <ligand>
        <name>substrate</name>
    </ligand>
</feature>
<feature type="binding site" evidence="1">
    <location>
        <begin position="199"/>
        <end position="201"/>
    </location>
    <ligand>
        <name>substrate</name>
    </ligand>
</feature>
<feature type="binding site" evidence="1">
    <location>
        <position position="199"/>
    </location>
    <ligand>
        <name>a divalent metal cation</name>
        <dbReference type="ChEBI" id="CHEBI:60240"/>
    </ligand>
</feature>
<feature type="binding site" evidence="1">
    <location>
        <begin position="221"/>
        <end position="222"/>
    </location>
    <ligand>
        <name>substrate</name>
    </ligand>
</feature>
<reference key="1">
    <citation type="journal article" date="2001" name="Nature">
        <title>Complete genome sequence of a multiple drug resistant Salmonella enterica serovar Typhi CT18.</title>
        <authorList>
            <person name="Parkhill J."/>
            <person name="Dougan G."/>
            <person name="James K.D."/>
            <person name="Thomson N.R."/>
            <person name="Pickard D."/>
            <person name="Wain J."/>
            <person name="Churcher C.M."/>
            <person name="Mungall K.L."/>
            <person name="Bentley S.D."/>
            <person name="Holden M.T.G."/>
            <person name="Sebaihia M."/>
            <person name="Baker S."/>
            <person name="Basham D."/>
            <person name="Brooks K."/>
            <person name="Chillingworth T."/>
            <person name="Connerton P."/>
            <person name="Cronin A."/>
            <person name="Davis P."/>
            <person name="Davies R.M."/>
            <person name="Dowd L."/>
            <person name="White N."/>
            <person name="Farrar J."/>
            <person name="Feltwell T."/>
            <person name="Hamlin N."/>
            <person name="Haque A."/>
            <person name="Hien T.T."/>
            <person name="Holroyd S."/>
            <person name="Jagels K."/>
            <person name="Krogh A."/>
            <person name="Larsen T.S."/>
            <person name="Leather S."/>
            <person name="Moule S."/>
            <person name="O'Gaora P."/>
            <person name="Parry C."/>
            <person name="Quail M.A."/>
            <person name="Rutherford K.M."/>
            <person name="Simmonds M."/>
            <person name="Skelton J."/>
            <person name="Stevens K."/>
            <person name="Whitehead S."/>
            <person name="Barrell B.G."/>
        </authorList>
    </citation>
    <scope>NUCLEOTIDE SEQUENCE [LARGE SCALE GENOMIC DNA]</scope>
    <source>
        <strain>CT18</strain>
    </source>
</reference>
<reference key="2">
    <citation type="journal article" date="2003" name="J. Bacteriol.">
        <title>Comparative genomics of Salmonella enterica serovar Typhi strains Ty2 and CT18.</title>
        <authorList>
            <person name="Deng W."/>
            <person name="Liou S.-R."/>
            <person name="Plunkett G. III"/>
            <person name="Mayhew G.F."/>
            <person name="Rose D.J."/>
            <person name="Burland V."/>
            <person name="Kodoyianni V."/>
            <person name="Schwartz D.C."/>
            <person name="Blattner F.R."/>
        </authorList>
    </citation>
    <scope>NUCLEOTIDE SEQUENCE [LARGE SCALE GENOMIC DNA]</scope>
    <source>
        <strain>ATCC 700931 / Ty2</strain>
    </source>
</reference>
<evidence type="ECO:0000250" key="1">
    <source>
        <dbReference type="UniProtKB" id="P32719"/>
    </source>
</evidence>
<evidence type="ECO:0000255" key="2"/>
<evidence type="ECO:0000305" key="3"/>
<keyword id="KW-1003">Cell membrane</keyword>
<keyword id="KW-0413">Isomerase</keyword>
<keyword id="KW-0472">Membrane</keyword>
<keyword id="KW-0479">Metal-binding</keyword>
<keyword id="KW-0812">Transmembrane</keyword>
<keyword id="KW-1133">Transmembrane helix</keyword>